<proteinExistence type="inferred from homology"/>
<sequence length="139" mass="15483">MSMKYLMLLFATMIIRSFADSGNAIETTSPEITNTTTDIPAIRLCGPEGDGYCLHGDCIHARDINGMYCRCSHGYTGIRCQHVVLVDYQRSEKPNTTTSYIPSPGIVLVLVGIIMCCLLSVYRFTRRTNKLPLQDMVVP</sequence>
<comment type="function">
    <text evidence="1">Stimulates cellular proliferation (hyperplasia)and mobility around infected cells to promote rapid and efficient spread of infection.</text>
</comment>
<comment type="subcellular location">
    <subcellularLocation>
        <location evidence="1">Secreted</location>
    </subcellularLocation>
</comment>
<comment type="induction">
    <text evidence="1">Expressed in the early phase of the viral replicative cycle.</text>
</comment>
<comment type="similarity">
    <text evidence="4">Belongs to the orthopoxvirus OPG019 family.</text>
</comment>
<gene>
    <name type="primary">OPG019</name>
    <name type="ordered locus">CMLV010</name>
</gene>
<protein>
    <recommendedName>
        <fullName>Growth factor</fullName>
    </recommendedName>
    <alternativeName>
        <fullName>Secreted epidermal growth factor-like</fullName>
    </alternativeName>
</protein>
<evidence type="ECO:0000250" key="1">
    <source>
        <dbReference type="UniProtKB" id="P01136"/>
    </source>
</evidence>
<evidence type="ECO:0000255" key="2"/>
<evidence type="ECO:0000255" key="3">
    <source>
        <dbReference type="PROSITE-ProRule" id="PRU00076"/>
    </source>
</evidence>
<evidence type="ECO:0000305" key="4"/>
<keyword id="KW-1015">Disulfide bond</keyword>
<keyword id="KW-0244">Early protein</keyword>
<keyword id="KW-0245">EGF-like domain</keyword>
<keyword id="KW-0325">Glycoprotein</keyword>
<keyword id="KW-0339">Growth factor</keyword>
<keyword id="KW-0964">Secreted</keyword>
<keyword id="KW-0732">Signal</keyword>
<reference key="1">
    <citation type="journal article" date="2002" name="Virology">
        <title>The genome of camelpox virus.</title>
        <authorList>
            <person name="Afonso C.L."/>
            <person name="Tulman E.R."/>
            <person name="Lu Z."/>
            <person name="Zsak L."/>
            <person name="Sandybaev N.T."/>
            <person name="Kerembekova U.Z."/>
            <person name="Zaitsev V.L."/>
            <person name="Kutish G.F."/>
            <person name="Rock D.L."/>
        </authorList>
    </citation>
    <scope>NUCLEOTIDE SEQUENCE [LARGE SCALE GENOMIC DNA]</scope>
</reference>
<name>VGF_CAMPM</name>
<organismHost>
    <name type="scientific">Camelus</name>
    <dbReference type="NCBI Taxonomy" id="9836"/>
</organismHost>
<dbReference type="EMBL" id="AF438165">
    <property type="protein sequence ID" value="AAL73717.1"/>
    <property type="molecule type" value="Genomic_DNA"/>
</dbReference>
<dbReference type="RefSeq" id="NP_570400.1">
    <property type="nucleotide sequence ID" value="NC_003391.1"/>
</dbReference>
<dbReference type="KEGG" id="vg:932511"/>
<dbReference type="Proteomes" id="UP000152221">
    <property type="component" value="Genome"/>
</dbReference>
<dbReference type="GO" id="GO:0005576">
    <property type="term" value="C:extracellular region"/>
    <property type="evidence" value="ECO:0007669"/>
    <property type="project" value="UniProtKB-SubCell"/>
</dbReference>
<dbReference type="GO" id="GO:0005154">
    <property type="term" value="F:epidermal growth factor receptor binding"/>
    <property type="evidence" value="ECO:0007669"/>
    <property type="project" value="InterPro"/>
</dbReference>
<dbReference type="GO" id="GO:0008083">
    <property type="term" value="F:growth factor activity"/>
    <property type="evidence" value="ECO:0007669"/>
    <property type="project" value="UniProtKB-KW"/>
</dbReference>
<dbReference type="GO" id="GO:0007173">
    <property type="term" value="P:epidermal growth factor receptor signaling pathway"/>
    <property type="evidence" value="ECO:0007669"/>
    <property type="project" value="TreeGrafter"/>
</dbReference>
<dbReference type="GO" id="GO:0008284">
    <property type="term" value="P:positive regulation of cell population proliferation"/>
    <property type="evidence" value="ECO:0007669"/>
    <property type="project" value="TreeGrafter"/>
</dbReference>
<dbReference type="GO" id="GO:0045840">
    <property type="term" value="P:positive regulation of mitotic nuclear division"/>
    <property type="evidence" value="ECO:0007669"/>
    <property type="project" value="TreeGrafter"/>
</dbReference>
<dbReference type="Gene3D" id="2.10.25.10">
    <property type="entry name" value="Laminin"/>
    <property type="match status" value="1"/>
</dbReference>
<dbReference type="InterPro" id="IPR000742">
    <property type="entry name" value="EGF-like_dom"/>
</dbReference>
<dbReference type="InterPro" id="IPR011170">
    <property type="entry name" value="GF_C11R"/>
</dbReference>
<dbReference type="PANTHER" id="PTHR10740:SF14">
    <property type="entry name" value="EGF-LIKE DOMAIN-CONTAINING PROTEIN"/>
    <property type="match status" value="1"/>
</dbReference>
<dbReference type="PANTHER" id="PTHR10740">
    <property type="entry name" value="TRANSFORMING GROWTH FACTOR ALPHA"/>
    <property type="match status" value="1"/>
</dbReference>
<dbReference type="PIRSF" id="PIRSF001779">
    <property type="entry name" value="GF_C11R"/>
    <property type="match status" value="1"/>
</dbReference>
<dbReference type="PRINTS" id="PR00009">
    <property type="entry name" value="EGFTGF"/>
</dbReference>
<dbReference type="SUPFAM" id="SSF57196">
    <property type="entry name" value="EGF/Laminin"/>
    <property type="match status" value="1"/>
</dbReference>
<dbReference type="PROSITE" id="PS00022">
    <property type="entry name" value="EGF_1"/>
    <property type="match status" value="1"/>
</dbReference>
<dbReference type="PROSITE" id="PS01186">
    <property type="entry name" value="EGF_2"/>
    <property type="match status" value="1"/>
</dbReference>
<dbReference type="PROSITE" id="PS50026">
    <property type="entry name" value="EGF_3"/>
    <property type="match status" value="1"/>
</dbReference>
<feature type="signal peptide" evidence="2">
    <location>
        <begin position="1"/>
        <end position="19"/>
    </location>
</feature>
<feature type="chain" id="PRO_0000007601" description="Growth factor">
    <location>
        <begin position="20"/>
        <end position="139"/>
    </location>
</feature>
<feature type="domain" description="EGF-like" evidence="3">
    <location>
        <begin position="41"/>
        <end position="81"/>
    </location>
</feature>
<feature type="glycosylation site" description="N-linked (GlcNAc...) asparagine; by host" evidence="2">
    <location>
        <position position="34"/>
    </location>
</feature>
<feature type="glycosylation site" description="N-linked (GlcNAc...) asparagine; by host" evidence="2">
    <location>
        <position position="95"/>
    </location>
</feature>
<feature type="disulfide bond" evidence="3">
    <location>
        <begin position="45"/>
        <end position="58"/>
    </location>
</feature>
<feature type="disulfide bond" evidence="3">
    <location>
        <begin position="53"/>
        <end position="69"/>
    </location>
</feature>
<feature type="disulfide bond" evidence="3">
    <location>
        <begin position="71"/>
        <end position="80"/>
    </location>
</feature>
<organism>
    <name type="scientific">Camelpox virus (strain M-96)</name>
    <dbReference type="NCBI Taxonomy" id="203173"/>
    <lineage>
        <taxon>Viruses</taxon>
        <taxon>Varidnaviria</taxon>
        <taxon>Bamfordvirae</taxon>
        <taxon>Nucleocytoviricota</taxon>
        <taxon>Pokkesviricetes</taxon>
        <taxon>Chitovirales</taxon>
        <taxon>Poxviridae</taxon>
        <taxon>Chordopoxvirinae</taxon>
        <taxon>Orthopoxvirus</taxon>
        <taxon>Camelpox virus</taxon>
    </lineage>
</organism>
<accession>Q8V307</accession>